<accession>A8G0Z3</accession>
<dbReference type="EC" id="4.2.1.9" evidence="1"/>
<dbReference type="EMBL" id="CP000821">
    <property type="protein sequence ID" value="ABV38766.1"/>
    <property type="molecule type" value="Genomic_DNA"/>
</dbReference>
<dbReference type="RefSeq" id="WP_012144495.1">
    <property type="nucleotide sequence ID" value="NC_009831.1"/>
</dbReference>
<dbReference type="SMR" id="A8G0Z3"/>
<dbReference type="STRING" id="425104.Ssed_4162"/>
<dbReference type="KEGG" id="sse:Ssed_4162"/>
<dbReference type="eggNOG" id="COG0129">
    <property type="taxonomic scope" value="Bacteria"/>
</dbReference>
<dbReference type="HOGENOM" id="CLU_014271_4_2_6"/>
<dbReference type="OrthoDB" id="9807077at2"/>
<dbReference type="UniPathway" id="UPA00047">
    <property type="reaction ID" value="UER00057"/>
</dbReference>
<dbReference type="UniPathway" id="UPA00049">
    <property type="reaction ID" value="UER00061"/>
</dbReference>
<dbReference type="Proteomes" id="UP000002015">
    <property type="component" value="Chromosome"/>
</dbReference>
<dbReference type="GO" id="GO:0005829">
    <property type="term" value="C:cytosol"/>
    <property type="evidence" value="ECO:0007669"/>
    <property type="project" value="TreeGrafter"/>
</dbReference>
<dbReference type="GO" id="GO:0051537">
    <property type="term" value="F:2 iron, 2 sulfur cluster binding"/>
    <property type="evidence" value="ECO:0007669"/>
    <property type="project" value="UniProtKB-UniRule"/>
</dbReference>
<dbReference type="GO" id="GO:0004160">
    <property type="term" value="F:dihydroxy-acid dehydratase activity"/>
    <property type="evidence" value="ECO:0007669"/>
    <property type="project" value="UniProtKB-UniRule"/>
</dbReference>
<dbReference type="GO" id="GO:0000287">
    <property type="term" value="F:magnesium ion binding"/>
    <property type="evidence" value="ECO:0007669"/>
    <property type="project" value="UniProtKB-UniRule"/>
</dbReference>
<dbReference type="GO" id="GO:0009097">
    <property type="term" value="P:isoleucine biosynthetic process"/>
    <property type="evidence" value="ECO:0007669"/>
    <property type="project" value="UniProtKB-UniRule"/>
</dbReference>
<dbReference type="GO" id="GO:0009099">
    <property type="term" value="P:L-valine biosynthetic process"/>
    <property type="evidence" value="ECO:0007669"/>
    <property type="project" value="UniProtKB-UniRule"/>
</dbReference>
<dbReference type="FunFam" id="3.50.30.80:FF:000001">
    <property type="entry name" value="Dihydroxy-acid dehydratase"/>
    <property type="match status" value="1"/>
</dbReference>
<dbReference type="Gene3D" id="3.50.30.80">
    <property type="entry name" value="IlvD/EDD C-terminal domain-like"/>
    <property type="match status" value="1"/>
</dbReference>
<dbReference type="HAMAP" id="MF_00012">
    <property type="entry name" value="IlvD"/>
    <property type="match status" value="1"/>
</dbReference>
<dbReference type="InterPro" id="IPR042096">
    <property type="entry name" value="Dihydro-acid_dehy_C"/>
</dbReference>
<dbReference type="InterPro" id="IPR004404">
    <property type="entry name" value="DihydroxyA_deHydtase"/>
</dbReference>
<dbReference type="InterPro" id="IPR020558">
    <property type="entry name" value="DiOHA_6PGluconate_deHydtase_CS"/>
</dbReference>
<dbReference type="InterPro" id="IPR056740">
    <property type="entry name" value="ILV_EDD_C"/>
</dbReference>
<dbReference type="InterPro" id="IPR000581">
    <property type="entry name" value="ILV_EDD_N"/>
</dbReference>
<dbReference type="InterPro" id="IPR037237">
    <property type="entry name" value="IlvD/EDD_N"/>
</dbReference>
<dbReference type="NCBIfam" id="TIGR00110">
    <property type="entry name" value="ilvD"/>
    <property type="match status" value="1"/>
</dbReference>
<dbReference type="NCBIfam" id="NF009103">
    <property type="entry name" value="PRK12448.1"/>
    <property type="match status" value="1"/>
</dbReference>
<dbReference type="PANTHER" id="PTHR43661">
    <property type="entry name" value="D-XYLONATE DEHYDRATASE"/>
    <property type="match status" value="1"/>
</dbReference>
<dbReference type="PANTHER" id="PTHR43661:SF3">
    <property type="entry name" value="D-XYLONATE DEHYDRATASE YAGF-RELATED"/>
    <property type="match status" value="1"/>
</dbReference>
<dbReference type="Pfam" id="PF24877">
    <property type="entry name" value="ILV_EDD_C"/>
    <property type="match status" value="1"/>
</dbReference>
<dbReference type="Pfam" id="PF00920">
    <property type="entry name" value="ILVD_EDD_N"/>
    <property type="match status" value="1"/>
</dbReference>
<dbReference type="SUPFAM" id="SSF143975">
    <property type="entry name" value="IlvD/EDD N-terminal domain-like"/>
    <property type="match status" value="1"/>
</dbReference>
<dbReference type="SUPFAM" id="SSF52016">
    <property type="entry name" value="LeuD/IlvD-like"/>
    <property type="match status" value="1"/>
</dbReference>
<dbReference type="PROSITE" id="PS00886">
    <property type="entry name" value="ILVD_EDD_1"/>
    <property type="match status" value="1"/>
</dbReference>
<dbReference type="PROSITE" id="PS00887">
    <property type="entry name" value="ILVD_EDD_2"/>
    <property type="match status" value="1"/>
</dbReference>
<name>ILVD_SHESH</name>
<protein>
    <recommendedName>
        <fullName evidence="1">Dihydroxy-acid dehydratase</fullName>
        <shortName evidence="1">DAD</shortName>
        <ecNumber evidence="1">4.2.1.9</ecNumber>
    </recommendedName>
</protein>
<proteinExistence type="inferred from homology"/>
<evidence type="ECO:0000255" key="1">
    <source>
        <dbReference type="HAMAP-Rule" id="MF_00012"/>
    </source>
</evidence>
<sequence length="616" mass="65285">MPKLRSATSTEGRNMAGARALWRATGVKENDFGKPIIAIANSFTQFVPGHVHLKDMGSLVAGAIEEAGGIAKEFNTIAVDDGIAMGHGGMLYSLPSRELISDSVEYMVNAHCADALVCISNCDKITPGMMMAALRLNIPVIFVSGGPMEAGKTKLSDKIIKLDLVDAMVAGADDRVSDEDSEQIERSACPTCGSCSGMFTANSMNCLTEALGLSLPGNGSMLATHADRRELFLEAGRRIMDLTTRYYKHDDESALPRNIANFNAFENAMTLDIAMGGSSNTVLHLLAAAQEGEVDFTMEDIDRLSRLVPHLCKVAPSTPEYHMEDVHRAGGVMGILGELDRAGLIHNDAYHVAGASLKEVLAKWDIAQSSDEAVHRFFSAGPAGIPTTKAFSQACRWDSVDNDRVGGCIRKREFAFSQEGGLAVLSGNIAVDGCIVKTAGVDEDNHTFIGSARVYESQDDAVAGILGGEVVAGDVVVIRYEGPKGGPGMQEMLYPTSYLKSRGLGKACALITDGRFSGGTSGLSIGHVSPEAAAGGTIGLVETGDRIEIDIPARSIKLAISDIELAARRSAMEARGKQAWKPVGRVREVSLALKAYALLATSADKGAVRDTSKLED</sequence>
<keyword id="KW-0001">2Fe-2S</keyword>
<keyword id="KW-0028">Amino-acid biosynthesis</keyword>
<keyword id="KW-0100">Branched-chain amino acid biosynthesis</keyword>
<keyword id="KW-0408">Iron</keyword>
<keyword id="KW-0411">Iron-sulfur</keyword>
<keyword id="KW-0456">Lyase</keyword>
<keyword id="KW-0460">Magnesium</keyword>
<keyword id="KW-0479">Metal-binding</keyword>
<keyword id="KW-1185">Reference proteome</keyword>
<gene>
    <name evidence="1" type="primary">ilvD</name>
    <name type="ordered locus">Ssed_4162</name>
</gene>
<feature type="chain" id="PRO_1000073991" description="Dihydroxy-acid dehydratase">
    <location>
        <begin position="1"/>
        <end position="616"/>
    </location>
</feature>
<feature type="active site" description="Proton acceptor" evidence="1">
    <location>
        <position position="517"/>
    </location>
</feature>
<feature type="binding site" evidence="1">
    <location>
        <position position="81"/>
    </location>
    <ligand>
        <name>Mg(2+)</name>
        <dbReference type="ChEBI" id="CHEBI:18420"/>
    </ligand>
</feature>
<feature type="binding site" evidence="1">
    <location>
        <position position="122"/>
    </location>
    <ligand>
        <name>[2Fe-2S] cluster</name>
        <dbReference type="ChEBI" id="CHEBI:190135"/>
    </ligand>
</feature>
<feature type="binding site" evidence="1">
    <location>
        <position position="123"/>
    </location>
    <ligand>
        <name>Mg(2+)</name>
        <dbReference type="ChEBI" id="CHEBI:18420"/>
    </ligand>
</feature>
<feature type="binding site" description="via carbamate group" evidence="1">
    <location>
        <position position="124"/>
    </location>
    <ligand>
        <name>Mg(2+)</name>
        <dbReference type="ChEBI" id="CHEBI:18420"/>
    </ligand>
</feature>
<feature type="binding site" evidence="1">
    <location>
        <position position="195"/>
    </location>
    <ligand>
        <name>[2Fe-2S] cluster</name>
        <dbReference type="ChEBI" id="CHEBI:190135"/>
    </ligand>
</feature>
<feature type="binding site" evidence="1">
    <location>
        <position position="491"/>
    </location>
    <ligand>
        <name>Mg(2+)</name>
        <dbReference type="ChEBI" id="CHEBI:18420"/>
    </ligand>
</feature>
<feature type="modified residue" description="N6-carboxylysine" evidence="1">
    <location>
        <position position="124"/>
    </location>
</feature>
<reference key="1">
    <citation type="submission" date="2007-08" db="EMBL/GenBank/DDBJ databases">
        <title>Complete sequence of Shewanella sediminis HAW-EB3.</title>
        <authorList>
            <consortium name="US DOE Joint Genome Institute"/>
            <person name="Copeland A."/>
            <person name="Lucas S."/>
            <person name="Lapidus A."/>
            <person name="Barry K."/>
            <person name="Glavina del Rio T."/>
            <person name="Dalin E."/>
            <person name="Tice H."/>
            <person name="Pitluck S."/>
            <person name="Chertkov O."/>
            <person name="Brettin T."/>
            <person name="Bruce D."/>
            <person name="Detter J.C."/>
            <person name="Han C."/>
            <person name="Schmutz J."/>
            <person name="Larimer F."/>
            <person name="Land M."/>
            <person name="Hauser L."/>
            <person name="Kyrpides N."/>
            <person name="Kim E."/>
            <person name="Zhao J.-S."/>
            <person name="Richardson P."/>
        </authorList>
    </citation>
    <scope>NUCLEOTIDE SEQUENCE [LARGE SCALE GENOMIC DNA]</scope>
    <source>
        <strain>HAW-EB3</strain>
    </source>
</reference>
<organism>
    <name type="scientific">Shewanella sediminis (strain HAW-EB3)</name>
    <dbReference type="NCBI Taxonomy" id="425104"/>
    <lineage>
        <taxon>Bacteria</taxon>
        <taxon>Pseudomonadati</taxon>
        <taxon>Pseudomonadota</taxon>
        <taxon>Gammaproteobacteria</taxon>
        <taxon>Alteromonadales</taxon>
        <taxon>Shewanellaceae</taxon>
        <taxon>Shewanella</taxon>
    </lineage>
</organism>
<comment type="function">
    <text evidence="1">Functions in the biosynthesis of branched-chain amino acids. Catalyzes the dehydration of (2R,3R)-2,3-dihydroxy-3-methylpentanoate (2,3-dihydroxy-3-methylvalerate) into 2-oxo-3-methylpentanoate (2-oxo-3-methylvalerate) and of (2R)-2,3-dihydroxy-3-methylbutanoate (2,3-dihydroxyisovalerate) into 2-oxo-3-methylbutanoate (2-oxoisovalerate), the penultimate precursor to L-isoleucine and L-valine, respectively.</text>
</comment>
<comment type="catalytic activity">
    <reaction evidence="1">
        <text>(2R)-2,3-dihydroxy-3-methylbutanoate = 3-methyl-2-oxobutanoate + H2O</text>
        <dbReference type="Rhea" id="RHEA:24809"/>
        <dbReference type="ChEBI" id="CHEBI:11851"/>
        <dbReference type="ChEBI" id="CHEBI:15377"/>
        <dbReference type="ChEBI" id="CHEBI:49072"/>
        <dbReference type="EC" id="4.2.1.9"/>
    </reaction>
    <physiologicalReaction direction="left-to-right" evidence="1">
        <dbReference type="Rhea" id="RHEA:24810"/>
    </physiologicalReaction>
</comment>
<comment type="catalytic activity">
    <reaction evidence="1">
        <text>(2R,3R)-2,3-dihydroxy-3-methylpentanoate = (S)-3-methyl-2-oxopentanoate + H2O</text>
        <dbReference type="Rhea" id="RHEA:27694"/>
        <dbReference type="ChEBI" id="CHEBI:15377"/>
        <dbReference type="ChEBI" id="CHEBI:35146"/>
        <dbReference type="ChEBI" id="CHEBI:49258"/>
        <dbReference type="EC" id="4.2.1.9"/>
    </reaction>
    <physiologicalReaction direction="left-to-right" evidence="1">
        <dbReference type="Rhea" id="RHEA:27695"/>
    </physiologicalReaction>
</comment>
<comment type="cofactor">
    <cofactor evidence="1">
        <name>[2Fe-2S] cluster</name>
        <dbReference type="ChEBI" id="CHEBI:190135"/>
    </cofactor>
    <text evidence="1">Binds 1 [2Fe-2S] cluster per subunit. This cluster acts as a Lewis acid cofactor.</text>
</comment>
<comment type="cofactor">
    <cofactor evidence="1">
        <name>Mg(2+)</name>
        <dbReference type="ChEBI" id="CHEBI:18420"/>
    </cofactor>
</comment>
<comment type="pathway">
    <text evidence="1">Amino-acid biosynthesis; L-isoleucine biosynthesis; L-isoleucine from 2-oxobutanoate: step 3/4.</text>
</comment>
<comment type="pathway">
    <text evidence="1">Amino-acid biosynthesis; L-valine biosynthesis; L-valine from pyruvate: step 3/4.</text>
</comment>
<comment type="subunit">
    <text evidence="1">Homodimer.</text>
</comment>
<comment type="similarity">
    <text evidence="1">Belongs to the IlvD/Edd family.</text>
</comment>